<gene>
    <name evidence="1" type="primary">hldE</name>
    <name type="ordered locus">PLES_53851</name>
</gene>
<keyword id="KW-0067">ATP-binding</keyword>
<keyword id="KW-0119">Carbohydrate metabolism</keyword>
<keyword id="KW-0418">Kinase</keyword>
<keyword id="KW-0511">Multifunctional enzyme</keyword>
<keyword id="KW-0547">Nucleotide-binding</keyword>
<keyword id="KW-0548">Nucleotidyltransferase</keyword>
<keyword id="KW-0808">Transferase</keyword>
<reference key="1">
    <citation type="journal article" date="2009" name="Genome Res.">
        <title>Newly introduced genomic prophage islands are critical determinants of in vivo competitiveness in the Liverpool epidemic strain of Pseudomonas aeruginosa.</title>
        <authorList>
            <person name="Winstanley C."/>
            <person name="Langille M.G.I."/>
            <person name="Fothergill J.L."/>
            <person name="Kukavica-Ibrulj I."/>
            <person name="Paradis-Bleau C."/>
            <person name="Sanschagrin F."/>
            <person name="Thomson N.R."/>
            <person name="Winsor G.L."/>
            <person name="Quail M.A."/>
            <person name="Lennard N."/>
            <person name="Bignell A."/>
            <person name="Clarke L."/>
            <person name="Seeger K."/>
            <person name="Saunders D."/>
            <person name="Harris D."/>
            <person name="Parkhill J."/>
            <person name="Hancock R.E.W."/>
            <person name="Brinkman F.S.L."/>
            <person name="Levesque R.C."/>
        </authorList>
    </citation>
    <scope>NUCLEOTIDE SEQUENCE [LARGE SCALE GENOMIC DNA]</scope>
    <source>
        <strain>LESB58</strain>
    </source>
</reference>
<organism>
    <name type="scientific">Pseudomonas aeruginosa (strain LESB58)</name>
    <dbReference type="NCBI Taxonomy" id="557722"/>
    <lineage>
        <taxon>Bacteria</taxon>
        <taxon>Pseudomonadati</taxon>
        <taxon>Pseudomonadota</taxon>
        <taxon>Gammaproteobacteria</taxon>
        <taxon>Pseudomonadales</taxon>
        <taxon>Pseudomonadaceae</taxon>
        <taxon>Pseudomonas</taxon>
    </lineage>
</organism>
<accession>B7V388</accession>
<feature type="chain" id="PRO_1000148131" description="Bifunctional protein HldE">
    <location>
        <begin position="1"/>
        <end position="473"/>
    </location>
</feature>
<feature type="region of interest" description="Ribokinase">
    <location>
        <begin position="1"/>
        <end position="317"/>
    </location>
</feature>
<feature type="region of interest" description="Cytidylyltransferase">
    <location>
        <begin position="343"/>
        <end position="473"/>
    </location>
</feature>
<feature type="active site" evidence="1">
    <location>
        <position position="263"/>
    </location>
</feature>
<feature type="binding site" evidence="1">
    <location>
        <begin position="194"/>
        <end position="197"/>
    </location>
    <ligand>
        <name>ATP</name>
        <dbReference type="ChEBI" id="CHEBI:30616"/>
    </ligand>
</feature>
<comment type="function">
    <text evidence="1">Catalyzes the phosphorylation of D-glycero-D-manno-heptose 7-phosphate at the C-1 position to selectively form D-glycero-beta-D-manno-heptose-1,7-bisphosphate.</text>
</comment>
<comment type="function">
    <text evidence="1">Catalyzes the ADP transfer from ATP to D-glycero-beta-D-manno-heptose 1-phosphate, yielding ADP-D-glycero-beta-D-manno-heptose.</text>
</comment>
<comment type="catalytic activity">
    <reaction evidence="1">
        <text>D-glycero-beta-D-manno-heptose 7-phosphate + ATP = D-glycero-beta-D-manno-heptose 1,7-bisphosphate + ADP + H(+)</text>
        <dbReference type="Rhea" id="RHEA:27473"/>
        <dbReference type="ChEBI" id="CHEBI:15378"/>
        <dbReference type="ChEBI" id="CHEBI:30616"/>
        <dbReference type="ChEBI" id="CHEBI:60204"/>
        <dbReference type="ChEBI" id="CHEBI:60208"/>
        <dbReference type="ChEBI" id="CHEBI:456216"/>
        <dbReference type="EC" id="2.7.1.167"/>
    </reaction>
</comment>
<comment type="catalytic activity">
    <reaction evidence="1">
        <text>D-glycero-beta-D-manno-heptose 1-phosphate + ATP + H(+) = ADP-D-glycero-beta-D-manno-heptose + diphosphate</text>
        <dbReference type="Rhea" id="RHEA:27465"/>
        <dbReference type="ChEBI" id="CHEBI:15378"/>
        <dbReference type="ChEBI" id="CHEBI:30616"/>
        <dbReference type="ChEBI" id="CHEBI:33019"/>
        <dbReference type="ChEBI" id="CHEBI:59967"/>
        <dbReference type="ChEBI" id="CHEBI:61593"/>
        <dbReference type="EC" id="2.7.7.70"/>
    </reaction>
</comment>
<comment type="pathway">
    <text evidence="1">Nucleotide-sugar biosynthesis; ADP-L-glycero-beta-D-manno-heptose biosynthesis; ADP-L-glycero-beta-D-manno-heptose from D-glycero-beta-D-manno-heptose 7-phosphate: step 1/4.</text>
</comment>
<comment type="pathway">
    <text evidence="1">Nucleotide-sugar biosynthesis; ADP-L-glycero-beta-D-manno-heptose biosynthesis; ADP-L-glycero-beta-D-manno-heptose from D-glycero-beta-D-manno-heptose 7-phosphate: step 3/4.</text>
</comment>
<comment type="subunit">
    <text evidence="1">Homodimer.</text>
</comment>
<comment type="similarity">
    <text evidence="1">In the N-terminal section; belongs to the carbohydrate kinase PfkB family.</text>
</comment>
<comment type="similarity">
    <text evidence="1">In the C-terminal section; belongs to the cytidylyltransferase family.</text>
</comment>
<name>HLDE_PSEA8</name>
<dbReference type="EC" id="2.7.1.167" evidence="1"/>
<dbReference type="EC" id="2.7.7.70" evidence="1"/>
<dbReference type="EMBL" id="FM209186">
    <property type="protein sequence ID" value="CAW30139.1"/>
    <property type="molecule type" value="Genomic_DNA"/>
</dbReference>
<dbReference type="RefSeq" id="WP_010792259.1">
    <property type="nucleotide sequence ID" value="NC_011770.1"/>
</dbReference>
<dbReference type="SMR" id="B7V388"/>
<dbReference type="KEGG" id="pag:PLES_53851"/>
<dbReference type="HOGENOM" id="CLU_021150_2_1_6"/>
<dbReference type="UniPathway" id="UPA00356">
    <property type="reaction ID" value="UER00437"/>
</dbReference>
<dbReference type="UniPathway" id="UPA00356">
    <property type="reaction ID" value="UER00439"/>
</dbReference>
<dbReference type="GO" id="GO:0005829">
    <property type="term" value="C:cytosol"/>
    <property type="evidence" value="ECO:0007669"/>
    <property type="project" value="TreeGrafter"/>
</dbReference>
<dbReference type="GO" id="GO:0005524">
    <property type="term" value="F:ATP binding"/>
    <property type="evidence" value="ECO:0007669"/>
    <property type="project" value="UniProtKB-UniRule"/>
</dbReference>
<dbReference type="GO" id="GO:0033785">
    <property type="term" value="F:heptose 7-phosphate kinase activity"/>
    <property type="evidence" value="ECO:0007669"/>
    <property type="project" value="UniProtKB-UniRule"/>
</dbReference>
<dbReference type="GO" id="GO:0033786">
    <property type="term" value="F:heptose-1-phosphate adenylyltransferase activity"/>
    <property type="evidence" value="ECO:0007669"/>
    <property type="project" value="UniProtKB-UniRule"/>
</dbReference>
<dbReference type="GO" id="GO:0016773">
    <property type="term" value="F:phosphotransferase activity, alcohol group as acceptor"/>
    <property type="evidence" value="ECO:0007669"/>
    <property type="project" value="InterPro"/>
</dbReference>
<dbReference type="GO" id="GO:0097171">
    <property type="term" value="P:ADP-L-glycero-beta-D-manno-heptose biosynthetic process"/>
    <property type="evidence" value="ECO:0007669"/>
    <property type="project" value="UniProtKB-UniPathway"/>
</dbReference>
<dbReference type="CDD" id="cd01172">
    <property type="entry name" value="RfaE_like"/>
    <property type="match status" value="1"/>
</dbReference>
<dbReference type="FunFam" id="3.40.1190.20:FF:000002">
    <property type="entry name" value="Bifunctional protein HldE"/>
    <property type="match status" value="1"/>
</dbReference>
<dbReference type="FunFam" id="3.40.50.620:FF:000028">
    <property type="entry name" value="Bifunctional protein HldE"/>
    <property type="match status" value="1"/>
</dbReference>
<dbReference type="Gene3D" id="3.40.1190.20">
    <property type="match status" value="1"/>
</dbReference>
<dbReference type="Gene3D" id="3.40.50.620">
    <property type="entry name" value="HUPs"/>
    <property type="match status" value="1"/>
</dbReference>
<dbReference type="HAMAP" id="MF_01603">
    <property type="entry name" value="HldE"/>
    <property type="match status" value="1"/>
</dbReference>
<dbReference type="InterPro" id="IPR023030">
    <property type="entry name" value="Bifunc_HldE"/>
</dbReference>
<dbReference type="InterPro" id="IPR002173">
    <property type="entry name" value="Carboh/pur_kinase_PfkB_CS"/>
</dbReference>
<dbReference type="InterPro" id="IPR004821">
    <property type="entry name" value="Cyt_trans-like"/>
</dbReference>
<dbReference type="InterPro" id="IPR011611">
    <property type="entry name" value="PfkB_dom"/>
</dbReference>
<dbReference type="InterPro" id="IPR011913">
    <property type="entry name" value="RfaE_dom_I"/>
</dbReference>
<dbReference type="InterPro" id="IPR011914">
    <property type="entry name" value="RfaE_dom_II"/>
</dbReference>
<dbReference type="InterPro" id="IPR029056">
    <property type="entry name" value="Ribokinase-like"/>
</dbReference>
<dbReference type="InterPro" id="IPR014729">
    <property type="entry name" value="Rossmann-like_a/b/a_fold"/>
</dbReference>
<dbReference type="NCBIfam" id="TIGR00125">
    <property type="entry name" value="cyt_tran_rel"/>
    <property type="match status" value="1"/>
</dbReference>
<dbReference type="NCBIfam" id="NF008454">
    <property type="entry name" value="PRK11316.1"/>
    <property type="match status" value="1"/>
</dbReference>
<dbReference type="NCBIfam" id="TIGR02198">
    <property type="entry name" value="rfaE_dom_I"/>
    <property type="match status" value="1"/>
</dbReference>
<dbReference type="NCBIfam" id="TIGR02199">
    <property type="entry name" value="rfaE_dom_II"/>
    <property type="match status" value="1"/>
</dbReference>
<dbReference type="PANTHER" id="PTHR46969">
    <property type="entry name" value="BIFUNCTIONAL PROTEIN HLDE"/>
    <property type="match status" value="1"/>
</dbReference>
<dbReference type="PANTHER" id="PTHR46969:SF1">
    <property type="entry name" value="BIFUNCTIONAL PROTEIN HLDE"/>
    <property type="match status" value="1"/>
</dbReference>
<dbReference type="Pfam" id="PF01467">
    <property type="entry name" value="CTP_transf_like"/>
    <property type="match status" value="1"/>
</dbReference>
<dbReference type="Pfam" id="PF00294">
    <property type="entry name" value="PfkB"/>
    <property type="match status" value="1"/>
</dbReference>
<dbReference type="SUPFAM" id="SSF52374">
    <property type="entry name" value="Nucleotidylyl transferase"/>
    <property type="match status" value="1"/>
</dbReference>
<dbReference type="SUPFAM" id="SSF53613">
    <property type="entry name" value="Ribokinase-like"/>
    <property type="match status" value="1"/>
</dbReference>
<dbReference type="PROSITE" id="PS00583">
    <property type="entry name" value="PFKB_KINASES_1"/>
    <property type="match status" value="1"/>
</dbReference>
<proteinExistence type="inferred from homology"/>
<evidence type="ECO:0000255" key="1">
    <source>
        <dbReference type="HAMAP-Rule" id="MF_01603"/>
    </source>
</evidence>
<protein>
    <recommendedName>
        <fullName evidence="1">Bifunctional protein HldE</fullName>
    </recommendedName>
    <domain>
        <recommendedName>
            <fullName evidence="1">D-beta-D-heptose 7-phosphate kinase</fullName>
            <ecNumber evidence="1">2.7.1.167</ecNumber>
        </recommendedName>
        <alternativeName>
            <fullName evidence="1">D-beta-D-heptose 7-phosphotransferase</fullName>
        </alternativeName>
        <alternativeName>
            <fullName evidence="1">D-glycero-beta-D-manno-heptose-7-phosphate kinase</fullName>
        </alternativeName>
    </domain>
    <domain>
        <recommendedName>
            <fullName evidence="1">D-beta-D-heptose 1-phosphate adenylyltransferase</fullName>
            <ecNumber evidence="1">2.7.7.70</ecNumber>
        </recommendedName>
        <alternativeName>
            <fullName evidence="1">D-glycero-beta-D-manno-heptose 1-phosphate adenylyltransferase</fullName>
        </alternativeName>
    </domain>
</protein>
<sequence>MKLSMPRFDQAPVLVVGDVMLDRYWHGATSRISPEAPVPVVRVEQHEDRPGGAANVALNIAALGAQALLVGVTGRDEAADSLANSLKAAGVDARFQRIDSQPTIVKLRVMSRHQQLLRVDFEEPFRTDAAALAVDVESLLAKVKVLVLSDYGKGALQNHQVLIQAARARNIPVLADPKGKDFAIYRGASLITPNLSEFETIVGRCADEAELVAKGQALMSELDLGALLVTRGEHGMTLLRDGQPALHLPARAREVFDVTGAGDTVISTLAAALAAGEELPSAVGLANLAAGIVVGKLGTAAISAPELRRAVQREQGSERGVLGLEQLLLAIEDARAHGEKIVFTNGCFDILHAGHVTYLEQARAQGDRLIVGVNDDASVTRLKGVGRPINSVDRRMAVLAGLGAVDWVVSFAEDTPERLLEQVRPDVLVKGGDYGVEQVVGAQIVKAYGGEVRVLGLVENSSTTAIVEKIRQR</sequence>